<name>CCL11_ARATH</name>
<protein>
    <recommendedName>
        <fullName>Cyclin-L1-1</fullName>
        <shortName>CycL1;1</shortName>
    </recommendedName>
    <alternativeName>
        <fullName>Arginine-rich cyclin 1</fullName>
        <shortName>AtRCY1</shortName>
    </alternativeName>
    <alternativeName>
        <fullName>Protein MODIFIER OF SNC1 12</fullName>
    </alternativeName>
</protein>
<dbReference type="EMBL" id="AF249734">
    <property type="protein sequence ID" value="AAK49036.1"/>
    <property type="molecule type" value="mRNA"/>
</dbReference>
<dbReference type="EMBL" id="AC002505">
    <property type="protein sequence ID" value="AAC14513.2"/>
    <property type="molecule type" value="Genomic_DNA"/>
</dbReference>
<dbReference type="EMBL" id="CP002685">
    <property type="protein sequence ID" value="AEC07836.1"/>
    <property type="molecule type" value="Genomic_DNA"/>
</dbReference>
<dbReference type="EMBL" id="CP002685">
    <property type="protein sequence ID" value="AEC07837.1"/>
    <property type="molecule type" value="Genomic_DNA"/>
</dbReference>
<dbReference type="EMBL" id="CP002685">
    <property type="protein sequence ID" value="AEC07838.1"/>
    <property type="molecule type" value="Genomic_DNA"/>
</dbReference>
<dbReference type="EMBL" id="AY091085">
    <property type="protein sequence ID" value="AAM13905.1"/>
    <property type="molecule type" value="mRNA"/>
</dbReference>
<dbReference type="EMBL" id="AY150419">
    <property type="protein sequence ID" value="AAN12964.1"/>
    <property type="molecule type" value="mRNA"/>
</dbReference>
<dbReference type="EMBL" id="AK226505">
    <property type="protein sequence ID" value="BAE98647.1"/>
    <property type="molecule type" value="mRNA"/>
</dbReference>
<dbReference type="EMBL" id="AK317155">
    <property type="protein sequence ID" value="BAH19841.1"/>
    <property type="molecule type" value="mRNA"/>
</dbReference>
<dbReference type="EMBL" id="AY086218">
    <property type="protein sequence ID" value="AAM64296.1"/>
    <property type="molecule type" value="mRNA"/>
</dbReference>
<dbReference type="PIR" id="T00976">
    <property type="entry name" value="T00976"/>
</dbReference>
<dbReference type="RefSeq" id="NP_001077962.1">
    <molecule id="Q8RWV3-2"/>
    <property type="nucleotide sequence ID" value="NM_001084493.1"/>
</dbReference>
<dbReference type="RefSeq" id="NP_001077963.1">
    <molecule id="Q8RWV3-2"/>
    <property type="nucleotide sequence ID" value="NM_001084494.1"/>
</dbReference>
<dbReference type="RefSeq" id="NP_565622.1">
    <molecule id="Q8RWV3-1"/>
    <property type="nucleotide sequence ID" value="NM_128200.5"/>
</dbReference>
<dbReference type="SMR" id="Q8RWV3"/>
<dbReference type="BioGRID" id="2535">
    <property type="interactions" value="3"/>
</dbReference>
<dbReference type="FunCoup" id="Q8RWV3">
    <property type="interactions" value="4358"/>
</dbReference>
<dbReference type="IntAct" id="Q8RWV3">
    <property type="interactions" value="2"/>
</dbReference>
<dbReference type="STRING" id="3702.Q8RWV3"/>
<dbReference type="iPTMnet" id="Q8RWV3"/>
<dbReference type="PaxDb" id="3702-AT2G26430.1"/>
<dbReference type="ProteomicsDB" id="239157">
    <molecule id="Q8RWV3-1"/>
</dbReference>
<dbReference type="EnsemblPlants" id="AT2G26430.1">
    <molecule id="Q8RWV3-1"/>
    <property type="protein sequence ID" value="AT2G26430.1"/>
    <property type="gene ID" value="AT2G26430"/>
</dbReference>
<dbReference type="EnsemblPlants" id="AT2G26430.2">
    <molecule id="Q8RWV3-2"/>
    <property type="protein sequence ID" value="AT2G26430.2"/>
    <property type="gene ID" value="AT2G26430"/>
</dbReference>
<dbReference type="EnsemblPlants" id="AT2G26430.3">
    <molecule id="Q8RWV3-2"/>
    <property type="protein sequence ID" value="AT2G26430.3"/>
    <property type="gene ID" value="AT2G26430"/>
</dbReference>
<dbReference type="GeneID" id="817183"/>
<dbReference type="Gramene" id="AT2G26430.1">
    <molecule id="Q8RWV3-1"/>
    <property type="protein sequence ID" value="AT2G26430.1"/>
    <property type="gene ID" value="AT2G26430"/>
</dbReference>
<dbReference type="Gramene" id="AT2G26430.2">
    <molecule id="Q8RWV3-2"/>
    <property type="protein sequence ID" value="AT2G26430.2"/>
    <property type="gene ID" value="AT2G26430"/>
</dbReference>
<dbReference type="Gramene" id="AT2G26430.3">
    <molecule id="Q8RWV3-2"/>
    <property type="protein sequence ID" value="AT2G26430.3"/>
    <property type="gene ID" value="AT2G26430"/>
</dbReference>
<dbReference type="KEGG" id="ath:AT2G26430"/>
<dbReference type="Araport" id="AT2G26430"/>
<dbReference type="TAIR" id="AT2G26430">
    <property type="gene designation" value="RCY1"/>
</dbReference>
<dbReference type="eggNOG" id="KOG0835">
    <property type="taxonomic scope" value="Eukaryota"/>
</dbReference>
<dbReference type="HOGENOM" id="CLU_022000_1_0_1"/>
<dbReference type="InParanoid" id="Q8RWV3"/>
<dbReference type="OrthoDB" id="10264655at2759"/>
<dbReference type="PhylomeDB" id="Q8RWV3"/>
<dbReference type="PRO" id="PR:Q8RWV3"/>
<dbReference type="Proteomes" id="UP000006548">
    <property type="component" value="Chromosome 2"/>
</dbReference>
<dbReference type="ExpressionAtlas" id="Q8RWV3">
    <property type="expression patterns" value="baseline and differential"/>
</dbReference>
<dbReference type="GO" id="GO:0005634">
    <property type="term" value="C:nucleus"/>
    <property type="evidence" value="ECO:0007669"/>
    <property type="project" value="UniProtKB-SubCell"/>
</dbReference>
<dbReference type="GO" id="GO:0009506">
    <property type="term" value="C:plasmodesma"/>
    <property type="evidence" value="ECO:0007005"/>
    <property type="project" value="TAIR"/>
</dbReference>
<dbReference type="GO" id="GO:0016538">
    <property type="term" value="F:cyclin-dependent protein serine/threonine kinase regulator activity"/>
    <property type="evidence" value="ECO:0007669"/>
    <property type="project" value="InterPro"/>
</dbReference>
<dbReference type="GO" id="GO:0051301">
    <property type="term" value="P:cell division"/>
    <property type="evidence" value="ECO:0007669"/>
    <property type="project" value="UniProtKB-KW"/>
</dbReference>
<dbReference type="GO" id="GO:0051321">
    <property type="term" value="P:meiotic cell cycle"/>
    <property type="evidence" value="ECO:0007669"/>
    <property type="project" value="UniProtKB-KW"/>
</dbReference>
<dbReference type="GO" id="GO:0006355">
    <property type="term" value="P:regulation of DNA-templated transcription"/>
    <property type="evidence" value="ECO:0000304"/>
    <property type="project" value="TAIR"/>
</dbReference>
<dbReference type="GO" id="GO:0006357">
    <property type="term" value="P:regulation of transcription by RNA polymerase II"/>
    <property type="evidence" value="ECO:0007669"/>
    <property type="project" value="InterPro"/>
</dbReference>
<dbReference type="GO" id="GO:0009651">
    <property type="term" value="P:response to salt stress"/>
    <property type="evidence" value="ECO:0000314"/>
    <property type="project" value="TAIR"/>
</dbReference>
<dbReference type="CDD" id="cd20591">
    <property type="entry name" value="CYCLIN_AcCycL_rpt1"/>
    <property type="match status" value="1"/>
</dbReference>
<dbReference type="CDD" id="cd20594">
    <property type="entry name" value="CYCLIN_AcCycL_rpt2"/>
    <property type="match status" value="1"/>
</dbReference>
<dbReference type="FunFam" id="1.10.472.10:FF:000068">
    <property type="entry name" value="Cyclin-L1-1 isoform A"/>
    <property type="match status" value="1"/>
</dbReference>
<dbReference type="FunFam" id="1.10.472.10:FF:000031">
    <property type="entry name" value="cyclin-L1-1-like isoform X1"/>
    <property type="match status" value="1"/>
</dbReference>
<dbReference type="Gene3D" id="1.10.472.10">
    <property type="entry name" value="Cyclin-like"/>
    <property type="match status" value="2"/>
</dbReference>
<dbReference type="InterPro" id="IPR013763">
    <property type="entry name" value="Cyclin-like_dom"/>
</dbReference>
<dbReference type="InterPro" id="IPR036915">
    <property type="entry name" value="Cyclin-like_sf"/>
</dbReference>
<dbReference type="InterPro" id="IPR043198">
    <property type="entry name" value="Cyclin/Ssn8"/>
</dbReference>
<dbReference type="InterPro" id="IPR006671">
    <property type="entry name" value="Cyclin_N"/>
</dbReference>
<dbReference type="PANTHER" id="PTHR10026">
    <property type="entry name" value="CYCLIN"/>
    <property type="match status" value="1"/>
</dbReference>
<dbReference type="Pfam" id="PF00134">
    <property type="entry name" value="Cyclin_N"/>
    <property type="match status" value="1"/>
</dbReference>
<dbReference type="Pfam" id="PF21797">
    <property type="entry name" value="CycT2-like_C"/>
    <property type="match status" value="1"/>
</dbReference>
<dbReference type="PIRSF" id="PIRSF036580">
    <property type="entry name" value="Cyclin_L"/>
    <property type="match status" value="1"/>
</dbReference>
<dbReference type="SMART" id="SM00385">
    <property type="entry name" value="CYCLIN"/>
    <property type="match status" value="2"/>
</dbReference>
<dbReference type="SUPFAM" id="SSF47954">
    <property type="entry name" value="Cyclin-like"/>
    <property type="match status" value="2"/>
</dbReference>
<evidence type="ECO:0000256" key="1">
    <source>
        <dbReference type="SAM" id="MobiDB-lite"/>
    </source>
</evidence>
<evidence type="ECO:0000269" key="2">
    <source>
    </source>
</evidence>
<evidence type="ECO:0000269" key="3">
    <source>
    </source>
</evidence>
<evidence type="ECO:0000269" key="4">
    <source>
    </source>
</evidence>
<evidence type="ECO:0000303" key="5">
    <source>
    </source>
</evidence>
<evidence type="ECO:0000305" key="6"/>
<reference key="1">
    <citation type="journal article" date="2002" name="Plant J.">
        <title>Expression of Arabidopsis SR-like splicing proteins confers salt tolerance to yeast and transgenic plants.</title>
        <authorList>
            <person name="Forment J."/>
            <person name="Naranjo M.A."/>
            <person name="Roldan M."/>
            <person name="Serrano R."/>
            <person name="Vicente O."/>
        </authorList>
    </citation>
    <scope>NUCLEOTIDE SEQUENCE [MRNA] (ISOFORM 1)</scope>
    <source>
        <strain>cv. Landsberg erecta</strain>
        <tissue>Seedling</tissue>
    </source>
</reference>
<reference key="2">
    <citation type="journal article" date="1999" name="Nature">
        <title>Sequence and analysis of chromosome 2 of the plant Arabidopsis thaliana.</title>
        <authorList>
            <person name="Lin X."/>
            <person name="Kaul S."/>
            <person name="Rounsley S.D."/>
            <person name="Shea T.P."/>
            <person name="Benito M.-I."/>
            <person name="Town C.D."/>
            <person name="Fujii C.Y."/>
            <person name="Mason T.M."/>
            <person name="Bowman C.L."/>
            <person name="Barnstead M.E."/>
            <person name="Feldblyum T.V."/>
            <person name="Buell C.R."/>
            <person name="Ketchum K.A."/>
            <person name="Lee J.J."/>
            <person name="Ronning C.M."/>
            <person name="Koo H.L."/>
            <person name="Moffat K.S."/>
            <person name="Cronin L.A."/>
            <person name="Shen M."/>
            <person name="Pai G."/>
            <person name="Van Aken S."/>
            <person name="Umayam L."/>
            <person name="Tallon L.J."/>
            <person name="Gill J.E."/>
            <person name="Adams M.D."/>
            <person name="Carrera A.J."/>
            <person name="Creasy T.H."/>
            <person name="Goodman H.M."/>
            <person name="Somerville C.R."/>
            <person name="Copenhaver G.P."/>
            <person name="Preuss D."/>
            <person name="Nierman W.C."/>
            <person name="White O."/>
            <person name="Eisen J.A."/>
            <person name="Salzberg S.L."/>
            <person name="Fraser C.M."/>
            <person name="Venter J.C."/>
        </authorList>
    </citation>
    <scope>NUCLEOTIDE SEQUENCE [LARGE SCALE GENOMIC DNA]</scope>
    <source>
        <strain>cv. Columbia</strain>
    </source>
</reference>
<reference key="3">
    <citation type="journal article" date="2017" name="Plant J.">
        <title>Araport11: a complete reannotation of the Arabidopsis thaliana reference genome.</title>
        <authorList>
            <person name="Cheng C.Y."/>
            <person name="Krishnakumar V."/>
            <person name="Chan A.P."/>
            <person name="Thibaud-Nissen F."/>
            <person name="Schobel S."/>
            <person name="Town C.D."/>
        </authorList>
    </citation>
    <scope>GENOME REANNOTATION</scope>
    <source>
        <strain>cv. Columbia</strain>
    </source>
</reference>
<reference key="4">
    <citation type="journal article" date="2003" name="Science">
        <title>Empirical analysis of transcriptional activity in the Arabidopsis genome.</title>
        <authorList>
            <person name="Yamada K."/>
            <person name="Lim J."/>
            <person name="Dale J.M."/>
            <person name="Chen H."/>
            <person name="Shinn P."/>
            <person name="Palm C.J."/>
            <person name="Southwick A.M."/>
            <person name="Wu H.C."/>
            <person name="Kim C.J."/>
            <person name="Nguyen M."/>
            <person name="Pham P.K."/>
            <person name="Cheuk R.F."/>
            <person name="Karlin-Newmann G."/>
            <person name="Liu S.X."/>
            <person name="Lam B."/>
            <person name="Sakano H."/>
            <person name="Wu T."/>
            <person name="Yu G."/>
            <person name="Miranda M."/>
            <person name="Quach H.L."/>
            <person name="Tripp M."/>
            <person name="Chang C.H."/>
            <person name="Lee J.M."/>
            <person name="Toriumi M.J."/>
            <person name="Chan M.M."/>
            <person name="Tang C.C."/>
            <person name="Onodera C.S."/>
            <person name="Deng J.M."/>
            <person name="Akiyama K."/>
            <person name="Ansari Y."/>
            <person name="Arakawa T."/>
            <person name="Banh J."/>
            <person name="Banno F."/>
            <person name="Bowser L."/>
            <person name="Brooks S.Y."/>
            <person name="Carninci P."/>
            <person name="Chao Q."/>
            <person name="Choy N."/>
            <person name="Enju A."/>
            <person name="Goldsmith A.D."/>
            <person name="Gurjal M."/>
            <person name="Hansen N.F."/>
            <person name="Hayashizaki Y."/>
            <person name="Johnson-Hopson C."/>
            <person name="Hsuan V.W."/>
            <person name="Iida K."/>
            <person name="Karnes M."/>
            <person name="Khan S."/>
            <person name="Koesema E."/>
            <person name="Ishida J."/>
            <person name="Jiang P.X."/>
            <person name="Jones T."/>
            <person name="Kawai J."/>
            <person name="Kamiya A."/>
            <person name="Meyers C."/>
            <person name="Nakajima M."/>
            <person name="Narusaka M."/>
            <person name="Seki M."/>
            <person name="Sakurai T."/>
            <person name="Satou M."/>
            <person name="Tamse R."/>
            <person name="Vaysberg M."/>
            <person name="Wallender E.K."/>
            <person name="Wong C."/>
            <person name="Yamamura Y."/>
            <person name="Yuan S."/>
            <person name="Shinozaki K."/>
            <person name="Davis R.W."/>
            <person name="Theologis A."/>
            <person name="Ecker J.R."/>
        </authorList>
    </citation>
    <scope>NUCLEOTIDE SEQUENCE [LARGE SCALE MRNA] (ISOFORM 1)</scope>
    <source>
        <strain>cv. Columbia</strain>
    </source>
</reference>
<reference key="5">
    <citation type="submission" date="2006-07" db="EMBL/GenBank/DDBJ databases">
        <title>Large-scale analysis of RIKEN Arabidopsis full-length (RAFL) cDNAs.</title>
        <authorList>
            <person name="Totoki Y."/>
            <person name="Seki M."/>
            <person name="Ishida J."/>
            <person name="Nakajima M."/>
            <person name="Enju A."/>
            <person name="Kamiya A."/>
            <person name="Narusaka M."/>
            <person name="Shin-i T."/>
            <person name="Nakagawa M."/>
            <person name="Sakamoto N."/>
            <person name="Oishi K."/>
            <person name="Kohara Y."/>
            <person name="Kobayashi M."/>
            <person name="Toyoda A."/>
            <person name="Sakaki Y."/>
            <person name="Sakurai T."/>
            <person name="Iida K."/>
            <person name="Akiyama K."/>
            <person name="Satou M."/>
            <person name="Toyoda T."/>
            <person name="Konagaya A."/>
            <person name="Carninci P."/>
            <person name="Kawai J."/>
            <person name="Hayashizaki Y."/>
            <person name="Shinozaki K."/>
        </authorList>
    </citation>
    <scope>NUCLEOTIDE SEQUENCE [LARGE SCALE MRNA] (ISOFORM 1)</scope>
    <source>
        <strain>cv. Columbia</strain>
    </source>
</reference>
<reference key="6">
    <citation type="journal article" date="2009" name="DNA Res.">
        <title>Analysis of multiple occurrences of alternative splicing events in Arabidopsis thaliana using novel sequenced full-length cDNAs.</title>
        <authorList>
            <person name="Iida K."/>
            <person name="Fukami-Kobayashi K."/>
            <person name="Toyoda A."/>
            <person name="Sakaki Y."/>
            <person name="Kobayashi M."/>
            <person name="Seki M."/>
            <person name="Shinozaki K."/>
        </authorList>
    </citation>
    <scope>NUCLEOTIDE SEQUENCE [LARGE SCALE MRNA] (ISOFORM 2)</scope>
    <source>
        <strain>cv. Columbia</strain>
        <tissue>Rosette leaf</tissue>
    </source>
</reference>
<reference key="7">
    <citation type="submission" date="2002-03" db="EMBL/GenBank/DDBJ databases">
        <title>Full-length cDNA from Arabidopsis thaliana.</title>
        <authorList>
            <person name="Brover V.V."/>
            <person name="Troukhan M.E."/>
            <person name="Alexandrov N.A."/>
            <person name="Lu Y.-P."/>
            <person name="Flavell R.B."/>
            <person name="Feldmann K.A."/>
        </authorList>
    </citation>
    <scope>NUCLEOTIDE SEQUENCE [LARGE SCALE MRNA] (ISOFORM 1)</scope>
</reference>
<reference key="8">
    <citation type="journal article" date="2004" name="Plant Physiol.">
        <title>Genome-wide analysis of the cyclin family in Arabidopsis and comparative phylogenetic analysis of plant cyclin-like proteins.</title>
        <authorList>
            <person name="Wang G."/>
            <person name="Kong H."/>
            <person name="Sun Y."/>
            <person name="Zhang X."/>
            <person name="Zhang W."/>
            <person name="Altman N."/>
            <person name="dePamphilis C.W."/>
            <person name="Ma H."/>
        </authorList>
    </citation>
    <scope>GENE FAMILY</scope>
    <scope>NOMENCLATURE</scope>
</reference>
<reference key="9">
    <citation type="journal article" date="2012" name="Plant J.">
        <title>The cyclin L homolog MOS12 and the MOS4-associated complex are required for the proper splicing of plant resistance genes.</title>
        <authorList>
            <person name="Xu F."/>
            <person name="Xu S."/>
            <person name="Wiermer M."/>
            <person name="Zhang Y."/>
            <person name="Li X."/>
        </authorList>
    </citation>
    <scope>FUNCTION</scope>
    <scope>DISRUPTION PHENOTYPE</scope>
    <scope>INTERACTION WITH MOS4</scope>
    <scope>SUBCELLULAR LOCATION</scope>
</reference>
<reference key="10">
    <citation type="journal article" date="2013" name="EMBO J.">
        <title>The splicing machinery promotes RNA-directed DNA methylation and transcriptional silencing in Arabidopsis.</title>
        <authorList>
            <person name="Zhang C.J."/>
            <person name="Zhou J.X."/>
            <person name="Liu J."/>
            <person name="Ma Z.Y."/>
            <person name="Zhang S.W."/>
            <person name="Dou K."/>
            <person name="Huang H.W."/>
            <person name="Cai T."/>
            <person name="Liu R."/>
            <person name="Zhu J.K."/>
            <person name="He X.J."/>
        </authorList>
    </citation>
    <scope>FUNCTION</scope>
</reference>
<reference key="11">
    <citation type="journal article" date="2014" name="Proc. Natl. Acad. Sci. U.S.A.">
        <title>CDKG1 protein kinase is essential for synapsis and male meiosis at high ambient temperature in Arabidopsis thaliana.</title>
        <authorList>
            <person name="Zheng T."/>
            <person name="Nibau C."/>
            <person name="Phillips D.W."/>
            <person name="Jenkins G."/>
            <person name="Armstrong S.J."/>
            <person name="Doonan J.H."/>
        </authorList>
    </citation>
    <scope>FUNCTION</scope>
    <scope>DISRUPTION PHENOTYPE</scope>
    <scope>INTERACTION WITH CDKG1</scope>
</reference>
<proteinExistence type="evidence at protein level"/>
<keyword id="KW-0025">Alternative splicing</keyword>
<keyword id="KW-0131">Cell cycle</keyword>
<keyword id="KW-0132">Cell division</keyword>
<keyword id="KW-0195">Cyclin</keyword>
<keyword id="KW-0469">Meiosis</keyword>
<keyword id="KW-0539">Nucleus</keyword>
<keyword id="KW-1185">Reference proteome</keyword>
<feature type="chain" id="PRO_0000287051" description="Cyclin-L1-1">
    <location>
        <begin position="1"/>
        <end position="416"/>
    </location>
</feature>
<feature type="region of interest" description="Disordered" evidence="1">
    <location>
        <begin position="286"/>
        <end position="416"/>
    </location>
</feature>
<feature type="compositionally biased region" description="Basic and acidic residues" evidence="1">
    <location>
        <begin position="304"/>
        <end position="315"/>
    </location>
</feature>
<feature type="compositionally biased region" description="Basic and acidic residues" evidence="1">
    <location>
        <begin position="328"/>
        <end position="374"/>
    </location>
</feature>
<feature type="compositionally biased region" description="Basic and acidic residues" evidence="1">
    <location>
        <begin position="384"/>
        <end position="393"/>
    </location>
</feature>
<feature type="compositionally biased region" description="Basic and acidic residues" evidence="1">
    <location>
        <begin position="401"/>
        <end position="410"/>
    </location>
</feature>
<feature type="splice variant" id="VSP_055305" description="In isoform 2." evidence="5">
    <location>
        <begin position="1"/>
        <end position="55"/>
    </location>
</feature>
<feature type="sequence conflict" description="In Ref. 1; AAK49036." evidence="6" ref="1">
    <original>S</original>
    <variation>T</variation>
    <location>
        <position position="12"/>
    </location>
</feature>
<feature type="sequence conflict" description="In Ref. 4; AAM13905." evidence="6" ref="4">
    <original>G</original>
    <variation>E</variation>
    <location>
        <position position="46"/>
    </location>
</feature>
<sequence length="416" mass="47555">MIYTAIDNFYLSDEQLKASPSRKDGIDETTEISLRIYGCDLIQEGGILLKLPQAVMATGQVLFQRFYCKKSLAKFDVKIVAASCVWLASKLEENPKKARQVIIVFHRMECRRENLPLEHLDMYAKKFSELKVELSRTERHILKEMGFVCHVEHPHKFISNYLATLETPPELRQEAWNLANDSLRTTLCVRFRSEVVACGVVYAAARRFQVPLPENPPWWKAFDADKSSIDEVCRVLAHLYSLPKAQYISVCKDGKPFTFSSRSGNSQGQSATKDLLPGAGEAVDTKCTAGSANNDLKDGMVTTPHEKATDSKKSGTESNSQPIVGDSSYERSKVGDRERESDREKERGRERDRGRSHRGRDSDRDSDRERDKLKDRSHHRSRDRLKDSGGHSDKSRHHSSRDRDYRDSSKDRRRHH</sequence>
<comment type="function">
    <text evidence="2 3 4">Cognate cyclin for CDKG1. Required for synapsis and male meiosis, and for the proper splicing of specific resistance (R) genes. Involved in regulation of DNA methylation and transcriptional silencing.</text>
</comment>
<comment type="subunit">
    <text evidence="2 4">Forms a complex with CDKG1. Interacts with MOS4 and associates with the spliceosome.</text>
</comment>
<comment type="subcellular location">
    <subcellularLocation>
        <location evidence="2">Nucleus</location>
    </subcellularLocation>
</comment>
<comment type="alternative products">
    <event type="alternative splicing"/>
    <isoform>
        <id>Q8RWV3-1</id>
        <name>1</name>
        <sequence type="displayed"/>
    </isoform>
    <isoform>
        <id>Q8RWV3-2</id>
        <name>2</name>
        <sequence type="described" ref="VSP_055305"/>
    </isoform>
</comment>
<comment type="disruption phenotype">
    <text evidence="2 4">Lethal, due to male sterility.</text>
</comment>
<comment type="similarity">
    <text evidence="6">Belongs to the cyclin family. Cyclin L subfamily.</text>
</comment>
<organism>
    <name type="scientific">Arabidopsis thaliana</name>
    <name type="common">Mouse-ear cress</name>
    <dbReference type="NCBI Taxonomy" id="3702"/>
    <lineage>
        <taxon>Eukaryota</taxon>
        <taxon>Viridiplantae</taxon>
        <taxon>Streptophyta</taxon>
        <taxon>Embryophyta</taxon>
        <taxon>Tracheophyta</taxon>
        <taxon>Spermatophyta</taxon>
        <taxon>Magnoliopsida</taxon>
        <taxon>eudicotyledons</taxon>
        <taxon>Gunneridae</taxon>
        <taxon>Pentapetalae</taxon>
        <taxon>rosids</taxon>
        <taxon>malvids</taxon>
        <taxon>Brassicales</taxon>
        <taxon>Brassicaceae</taxon>
        <taxon>Camelineae</taxon>
        <taxon>Arabidopsis</taxon>
    </lineage>
</organism>
<gene>
    <name type="primary">CYCL1-1</name>
    <name type="synonym">MOS12</name>
    <name type="synonym">RCY1</name>
    <name type="ordered locus">At2g26430</name>
    <name type="ORF">T9J22.10</name>
</gene>
<accession>Q8RWV3</accession>
<accession>A8MR67</accession>
<accession>O48710</accession>
<accession>Q94L33</accession>